<feature type="chain" id="PRO_0000170383" description="Nucleoid-associated protein CV_1611">
    <location>
        <begin position="1"/>
        <end position="112"/>
    </location>
</feature>
<keyword id="KW-0963">Cytoplasm</keyword>
<keyword id="KW-0238">DNA-binding</keyword>
<keyword id="KW-1185">Reference proteome</keyword>
<comment type="function">
    <text evidence="1">Binds to DNA and alters its conformation. May be involved in regulation of gene expression, nucleoid organization and DNA protection.</text>
</comment>
<comment type="subunit">
    <text evidence="1">Homodimer.</text>
</comment>
<comment type="subcellular location">
    <subcellularLocation>
        <location evidence="1">Cytoplasm</location>
        <location evidence="1">Nucleoid</location>
    </subcellularLocation>
</comment>
<comment type="similarity">
    <text evidence="1">Belongs to the YbaB/EbfC family.</text>
</comment>
<comment type="sequence caution" evidence="2">
    <conflict type="erroneous initiation">
        <sequence resource="EMBL-CDS" id="AAQ59287"/>
    </conflict>
</comment>
<reference key="1">
    <citation type="journal article" date="2003" name="Proc. Natl. Acad. Sci. U.S.A.">
        <title>The complete genome sequence of Chromobacterium violaceum reveals remarkable and exploitable bacterial adaptability.</title>
        <authorList>
            <person name="Vasconcelos A.T.R."/>
            <person name="de Almeida D.F."/>
            <person name="Hungria M."/>
            <person name="Guimaraes C.T."/>
            <person name="Antonio R.V."/>
            <person name="Almeida F.C."/>
            <person name="de Almeida L.G.P."/>
            <person name="de Almeida R."/>
            <person name="Alves-Gomes J.A."/>
            <person name="Andrade E.M."/>
            <person name="Araripe J."/>
            <person name="de Araujo M.F.F."/>
            <person name="Astolfi-Filho S."/>
            <person name="Azevedo V."/>
            <person name="Baptista A.J."/>
            <person name="Bataus L.A.M."/>
            <person name="Batista J.S."/>
            <person name="Belo A."/>
            <person name="van den Berg C."/>
            <person name="Bogo M."/>
            <person name="Bonatto S."/>
            <person name="Bordignon J."/>
            <person name="Brigido M.M."/>
            <person name="Brito C.A."/>
            <person name="Brocchi M."/>
            <person name="Burity H.A."/>
            <person name="Camargo A.A."/>
            <person name="Cardoso D.D.P."/>
            <person name="Carneiro N.P."/>
            <person name="Carraro D.M."/>
            <person name="Carvalho C.M.B."/>
            <person name="Cascardo J.C.M."/>
            <person name="Cavada B.S."/>
            <person name="Chueire L.M.O."/>
            <person name="Creczynski-Pasa T.B."/>
            <person name="Cunha-Junior N.C."/>
            <person name="Fagundes N."/>
            <person name="Falcao C.L."/>
            <person name="Fantinatti F."/>
            <person name="Farias I.P."/>
            <person name="Felipe M.S.S."/>
            <person name="Ferrari L.P."/>
            <person name="Ferro J.A."/>
            <person name="Ferro M.I.T."/>
            <person name="Franco G.R."/>
            <person name="Freitas N.S.A."/>
            <person name="Furlan L.R."/>
            <person name="Gazzinelli R.T."/>
            <person name="Gomes E.A."/>
            <person name="Goncalves P.R."/>
            <person name="Grangeiro T.B."/>
            <person name="Grattapaglia D."/>
            <person name="Grisard E.C."/>
            <person name="Hanna E.S."/>
            <person name="Jardim S.N."/>
            <person name="Laurino J."/>
            <person name="Leoi L.C.T."/>
            <person name="Lima L.F.A."/>
            <person name="Loureiro M.F."/>
            <person name="Lyra M.C.C.P."/>
            <person name="Madeira H.M.F."/>
            <person name="Manfio G.P."/>
            <person name="Maranhao A.Q."/>
            <person name="Martins W.S."/>
            <person name="di Mauro S.M.Z."/>
            <person name="de Medeiros S.R.B."/>
            <person name="Meissner R.V."/>
            <person name="Moreira M.A.M."/>
            <person name="Nascimento F.F."/>
            <person name="Nicolas M.F."/>
            <person name="Oliveira J.G."/>
            <person name="Oliveira S.C."/>
            <person name="Paixao R.F.C."/>
            <person name="Parente J.A."/>
            <person name="Pedrosa F.O."/>
            <person name="Pena S.D.J."/>
            <person name="Pereira J.O."/>
            <person name="Pereira M."/>
            <person name="Pinto L.S.R.C."/>
            <person name="Pinto L.S."/>
            <person name="Porto J.I.R."/>
            <person name="Potrich D.P."/>
            <person name="Ramalho-Neto C.E."/>
            <person name="Reis A.M.M."/>
            <person name="Rigo L.U."/>
            <person name="Rondinelli E."/>
            <person name="Santos E.B.P."/>
            <person name="Santos F.R."/>
            <person name="Schneider M.P.C."/>
            <person name="Seuanez H.N."/>
            <person name="Silva A.M.R."/>
            <person name="da Silva A.L.C."/>
            <person name="Silva D.W."/>
            <person name="Silva R."/>
            <person name="Simoes I.C."/>
            <person name="Simon D."/>
            <person name="Soares C.M.A."/>
            <person name="Soares R.B.A."/>
            <person name="Souza E.M."/>
            <person name="Souza K.R.L."/>
            <person name="Souza R.C."/>
            <person name="Steffens M.B.R."/>
            <person name="Steindel M."/>
            <person name="Teixeira S.R."/>
            <person name="Urmenyi T."/>
            <person name="Vettore A."/>
            <person name="Wassem R."/>
            <person name="Zaha A."/>
            <person name="Simpson A.J.G."/>
        </authorList>
    </citation>
    <scope>NUCLEOTIDE SEQUENCE [LARGE SCALE GENOMIC DNA]</scope>
    <source>
        <strain>ATCC 12472 / DSM 30191 / JCM 1249 / CCUG 213 / NBRC 12614 / NCIMB 9131 / NCTC 9757 / MK</strain>
    </source>
</reference>
<accession>Q7NXL5</accession>
<sequence length="112" mass="12213">MFGKAGIAGLMKQAQQMQENMKKAQEELAKVEVEGQSGAGMVKVTMTCSHDVKRVAIDDSVLEDAKEDKEMLEDLIAAAFNDAVRKVEATTQERMSGFTNGLNLPAGMKFPF</sequence>
<evidence type="ECO:0000255" key="1">
    <source>
        <dbReference type="HAMAP-Rule" id="MF_00274"/>
    </source>
</evidence>
<evidence type="ECO:0000305" key="2"/>
<proteinExistence type="inferred from homology"/>
<organism>
    <name type="scientific">Chromobacterium violaceum (strain ATCC 12472 / DSM 30191 / JCM 1249 / CCUG 213 / NBRC 12614 / NCIMB 9131 / NCTC 9757 / MK)</name>
    <dbReference type="NCBI Taxonomy" id="243365"/>
    <lineage>
        <taxon>Bacteria</taxon>
        <taxon>Pseudomonadati</taxon>
        <taxon>Pseudomonadota</taxon>
        <taxon>Betaproteobacteria</taxon>
        <taxon>Neisseriales</taxon>
        <taxon>Chromobacteriaceae</taxon>
        <taxon>Chromobacterium</taxon>
    </lineage>
</organism>
<dbReference type="EMBL" id="AE016825">
    <property type="protein sequence ID" value="AAQ59287.1"/>
    <property type="status" value="ALT_INIT"/>
    <property type="molecule type" value="Genomic_DNA"/>
</dbReference>
<dbReference type="RefSeq" id="WP_043595814.1">
    <property type="nucleotide sequence ID" value="NC_005085.1"/>
</dbReference>
<dbReference type="SMR" id="Q7NXL5"/>
<dbReference type="STRING" id="243365.CV_1611"/>
<dbReference type="GeneID" id="66367295"/>
<dbReference type="KEGG" id="cvi:CV_1611"/>
<dbReference type="eggNOG" id="COG0718">
    <property type="taxonomic scope" value="Bacteria"/>
</dbReference>
<dbReference type="HOGENOM" id="CLU_140930_0_0_4"/>
<dbReference type="OrthoDB" id="9808738at2"/>
<dbReference type="Proteomes" id="UP000001424">
    <property type="component" value="Chromosome"/>
</dbReference>
<dbReference type="GO" id="GO:0043590">
    <property type="term" value="C:bacterial nucleoid"/>
    <property type="evidence" value="ECO:0007669"/>
    <property type="project" value="UniProtKB-UniRule"/>
</dbReference>
<dbReference type="GO" id="GO:0005829">
    <property type="term" value="C:cytosol"/>
    <property type="evidence" value="ECO:0007669"/>
    <property type="project" value="TreeGrafter"/>
</dbReference>
<dbReference type="GO" id="GO:0003677">
    <property type="term" value="F:DNA binding"/>
    <property type="evidence" value="ECO:0007669"/>
    <property type="project" value="UniProtKB-UniRule"/>
</dbReference>
<dbReference type="FunFam" id="3.30.1310.10:FF:000001">
    <property type="entry name" value="Nucleoid-associated protein YbaB"/>
    <property type="match status" value="1"/>
</dbReference>
<dbReference type="Gene3D" id="3.30.1310.10">
    <property type="entry name" value="Nucleoid-associated protein YbaB-like domain"/>
    <property type="match status" value="1"/>
</dbReference>
<dbReference type="HAMAP" id="MF_00274">
    <property type="entry name" value="DNA_YbaB_EbfC"/>
    <property type="match status" value="1"/>
</dbReference>
<dbReference type="InterPro" id="IPR036894">
    <property type="entry name" value="YbaB-like_sf"/>
</dbReference>
<dbReference type="InterPro" id="IPR004401">
    <property type="entry name" value="YbaB/EbfC"/>
</dbReference>
<dbReference type="NCBIfam" id="TIGR00103">
    <property type="entry name" value="DNA_YbaB_EbfC"/>
    <property type="match status" value="1"/>
</dbReference>
<dbReference type="PANTHER" id="PTHR33449">
    <property type="entry name" value="NUCLEOID-ASSOCIATED PROTEIN YBAB"/>
    <property type="match status" value="1"/>
</dbReference>
<dbReference type="PANTHER" id="PTHR33449:SF1">
    <property type="entry name" value="NUCLEOID-ASSOCIATED PROTEIN YBAB"/>
    <property type="match status" value="1"/>
</dbReference>
<dbReference type="Pfam" id="PF02575">
    <property type="entry name" value="YbaB_DNA_bd"/>
    <property type="match status" value="1"/>
</dbReference>
<dbReference type="PIRSF" id="PIRSF004555">
    <property type="entry name" value="UCP004555"/>
    <property type="match status" value="1"/>
</dbReference>
<dbReference type="SUPFAM" id="SSF82607">
    <property type="entry name" value="YbaB-like"/>
    <property type="match status" value="1"/>
</dbReference>
<gene>
    <name type="ordered locus">CV_1611</name>
</gene>
<protein>
    <recommendedName>
        <fullName evidence="1">Nucleoid-associated protein CV_1611</fullName>
    </recommendedName>
</protein>
<name>Y1611_CHRVO</name>